<feature type="chain" id="PRO_0000065331" description="Putative metallophosphoesterase F40B5.2">
    <location>
        <begin position="1"/>
        <end position="482"/>
    </location>
</feature>
<feature type="transmembrane region" description="Helical" evidence="2">
    <location>
        <begin position="15"/>
        <end position="35"/>
    </location>
</feature>
<feature type="transmembrane region" description="Helical" evidence="2">
    <location>
        <begin position="129"/>
        <end position="149"/>
    </location>
</feature>
<feature type="transmembrane region" description="Helical" evidence="2">
    <location>
        <begin position="156"/>
        <end position="176"/>
    </location>
</feature>
<feature type="transmembrane region" description="Helical" evidence="2">
    <location>
        <begin position="205"/>
        <end position="225"/>
    </location>
</feature>
<feature type="binding site" evidence="1">
    <location>
        <position position="256"/>
    </location>
    <ligand>
        <name>a divalent metal cation</name>
        <dbReference type="ChEBI" id="CHEBI:60240"/>
        <label>1</label>
    </ligand>
</feature>
<feature type="binding site" evidence="1">
    <location>
        <position position="258"/>
    </location>
    <ligand>
        <name>a divalent metal cation</name>
        <dbReference type="ChEBI" id="CHEBI:60240"/>
        <label>1</label>
    </ligand>
</feature>
<feature type="binding site" evidence="1">
    <location>
        <position position="288"/>
    </location>
    <ligand>
        <name>a divalent metal cation</name>
        <dbReference type="ChEBI" id="CHEBI:60240"/>
        <label>1</label>
    </ligand>
</feature>
<feature type="binding site" evidence="1">
    <location>
        <position position="288"/>
    </location>
    <ligand>
        <name>a divalent metal cation</name>
        <dbReference type="ChEBI" id="CHEBI:60240"/>
        <label>2</label>
    </ligand>
</feature>
<feature type="binding site" evidence="1">
    <location>
        <position position="319"/>
    </location>
    <ligand>
        <name>a divalent metal cation</name>
        <dbReference type="ChEBI" id="CHEBI:60240"/>
        <label>2</label>
    </ligand>
</feature>
<feature type="binding site" evidence="1">
    <location>
        <position position="421"/>
    </location>
    <ligand>
        <name>a divalent metal cation</name>
        <dbReference type="ChEBI" id="CHEBI:60240"/>
        <label>2</label>
    </ligand>
</feature>
<feature type="binding site" evidence="1">
    <location>
        <position position="423"/>
    </location>
    <ligand>
        <name>a divalent metal cation</name>
        <dbReference type="ChEBI" id="CHEBI:60240"/>
        <label>1</label>
    </ligand>
</feature>
<feature type="splice variant" id="VSP_010626" description="In isoform b." evidence="3">
    <location>
        <begin position="78"/>
        <end position="104"/>
    </location>
</feature>
<sequence length="482" mass="53488">MSSRCKRCLNSFSEMNLKLKIAIIVIGFIHVSIAIARKSTDGVAHHRLVRLHTILITSTAMLSASYYIWKRVNFAITKLFKTLKSENELPIANSNESESDFAMNTLLPSPNPVGNRRLRLICFQDIAQALMMLFLFLSHIAMFFYYIFLGPEPNVIAITSLSFIAAYAHILIFLLIADVLFYSTKLIHSKVAPNSVHTYLKENRCYHILLALILGFIFMFAGLYTTHTDPIVRSASIPMKRFQSNSGNVSIALLSDVHIGPSVGRTRIAKIVELTNALKPDIIAIAGDLADGLVRDFHGAAEPLCNLKAPGGVYFATGNHEYMHGNVTEWFWFLENCNITVLHNLNKHITVNGQKLCVAGADDLYALRSNVPGHGMDLRKALGTCNSDSTNILLAHQPNAAKIVLSDSELSKKVNLILSGHTHGGQMYPFVPIVHLANAFVRGQYYDKSTDTYVYVSAGVNYFGPPIKMFGSCEIIFITMTQ</sequence>
<protein>
    <recommendedName>
        <fullName>Putative metallophosphoesterase F40B5.2</fullName>
        <ecNumber>3.1.-.-</ecNumber>
    </recommendedName>
</protein>
<gene>
    <name type="ORF">F40B5.2</name>
</gene>
<comment type="subcellular location">
    <subcellularLocation>
        <location evidence="3">Membrane</location>
        <topology evidence="3">Multi-pass membrane protein</topology>
    </subcellularLocation>
</comment>
<comment type="alternative products">
    <event type="alternative splicing"/>
    <isoform>
        <id>Q09320-1</id>
        <name>a</name>
        <sequence type="displayed"/>
    </isoform>
    <isoform>
        <id>Q09320-2</id>
        <name>b</name>
        <sequence type="described" ref="VSP_010626"/>
    </isoform>
</comment>
<comment type="similarity">
    <text evidence="3">Belongs to the metallophosphoesterase superfamily. LOC643853 family.</text>
</comment>
<comment type="sequence caution" evidence="3">
    <conflict type="erroneous gene model prediction">
        <sequence resource="EMBL-CDS" id="CCD70883"/>
    </conflict>
</comment>
<comment type="sequence caution" evidence="3">
    <conflict type="erroneous gene model prediction">
        <sequence resource="EMBL-CDS" id="CCD70884"/>
    </conflict>
</comment>
<organism>
    <name type="scientific">Caenorhabditis elegans</name>
    <dbReference type="NCBI Taxonomy" id="6239"/>
    <lineage>
        <taxon>Eukaryota</taxon>
        <taxon>Metazoa</taxon>
        <taxon>Ecdysozoa</taxon>
        <taxon>Nematoda</taxon>
        <taxon>Chromadorea</taxon>
        <taxon>Rhabditida</taxon>
        <taxon>Rhabditina</taxon>
        <taxon>Rhabditomorpha</taxon>
        <taxon>Rhabditoidea</taxon>
        <taxon>Rhabditidae</taxon>
        <taxon>Peloderinae</taxon>
        <taxon>Caenorhabditis</taxon>
    </lineage>
</organism>
<accession>Q09320</accession>
<accession>Q1W0S1</accession>
<accession>Q1W0S2</accession>
<accession>Q8ST16</accession>
<accession>Q8ST17</accession>
<keyword id="KW-0025">Alternative splicing</keyword>
<keyword id="KW-0378">Hydrolase</keyword>
<keyword id="KW-0472">Membrane</keyword>
<keyword id="KW-0479">Metal-binding</keyword>
<keyword id="KW-1185">Reference proteome</keyword>
<keyword id="KW-0812">Transmembrane</keyword>
<keyword id="KW-1133">Transmembrane helix</keyword>
<proteinExistence type="inferred from homology"/>
<reference key="1">
    <citation type="journal article" date="1998" name="Science">
        <title>Genome sequence of the nematode C. elegans: a platform for investigating biology.</title>
        <authorList>
            <consortium name="The C. elegans sequencing consortium"/>
        </authorList>
    </citation>
    <scope>NUCLEOTIDE SEQUENCE [LARGE SCALE GENOMIC DNA]</scope>
    <scope>ALTERNATIVE SPLICING</scope>
    <source>
        <strain>Bristol N2</strain>
    </source>
</reference>
<evidence type="ECO:0000250" key="1"/>
<evidence type="ECO:0000255" key="2"/>
<evidence type="ECO:0000305" key="3"/>
<dbReference type="EC" id="3.1.-.-"/>
<dbReference type="EMBL" id="FO081340">
    <property type="protein sequence ID" value="CCD70883.1"/>
    <property type="status" value="ALT_SEQ"/>
    <property type="molecule type" value="Genomic_DNA"/>
</dbReference>
<dbReference type="EMBL" id="FO081340">
    <property type="protein sequence ID" value="CCD70884.1"/>
    <property type="status" value="ALT_SEQ"/>
    <property type="molecule type" value="Genomic_DNA"/>
</dbReference>
<dbReference type="PIR" id="T16303">
    <property type="entry name" value="T16303"/>
</dbReference>
<dbReference type="RefSeq" id="NP_509417.2">
    <property type="nucleotide sequence ID" value="NM_077016.4"/>
</dbReference>
<dbReference type="RefSeq" id="NP_509418.2">
    <property type="nucleotide sequence ID" value="NM_077017.2"/>
</dbReference>
<dbReference type="SMR" id="Q09320"/>
<dbReference type="FunCoup" id="Q09320">
    <property type="interactions" value="860"/>
</dbReference>
<dbReference type="STRING" id="6239.F40B5.2a.1"/>
<dbReference type="PaxDb" id="6239-F40B5.2a"/>
<dbReference type="PeptideAtlas" id="Q09320"/>
<dbReference type="EnsemblMetazoa" id="F40B5.2a.1">
    <property type="protein sequence ID" value="F40B5.2a.1"/>
    <property type="gene ID" value="WBGene00018226"/>
</dbReference>
<dbReference type="EnsemblMetazoa" id="F40B5.2b.1">
    <property type="protein sequence ID" value="F40B5.2b.1"/>
    <property type="gene ID" value="WBGene00018226"/>
</dbReference>
<dbReference type="EnsemblMetazoa" id="F40B5.2b.2">
    <property type="protein sequence ID" value="F40B5.2b.2"/>
    <property type="gene ID" value="WBGene00018226"/>
</dbReference>
<dbReference type="GeneID" id="181090"/>
<dbReference type="KEGG" id="cel:CELE_F40B5.2"/>
<dbReference type="UCSC" id="F40B5.2b">
    <property type="organism name" value="c. elegans"/>
</dbReference>
<dbReference type="AGR" id="WB:WBGene00018226"/>
<dbReference type="CTD" id="181090"/>
<dbReference type="WormBase" id="F40B5.2a">
    <property type="protein sequence ID" value="CE40055"/>
    <property type="gene ID" value="WBGene00018226"/>
</dbReference>
<dbReference type="WormBase" id="F40B5.2b">
    <property type="protein sequence ID" value="CE40056"/>
    <property type="gene ID" value="WBGene00018226"/>
</dbReference>
<dbReference type="eggNOG" id="ENOG502QRHG">
    <property type="taxonomic scope" value="Eukaryota"/>
</dbReference>
<dbReference type="GeneTree" id="ENSGT00390000010260"/>
<dbReference type="InParanoid" id="Q09320"/>
<dbReference type="OrthoDB" id="783096at2759"/>
<dbReference type="PRO" id="PR:Q09320"/>
<dbReference type="Proteomes" id="UP000001940">
    <property type="component" value="Chromosome X"/>
</dbReference>
<dbReference type="Bgee" id="WBGene00018226">
    <property type="expression patterns" value="Expressed in pharyngeal muscle cell (C elegans) and 3 other cell types or tissues"/>
</dbReference>
<dbReference type="GO" id="GO:0016020">
    <property type="term" value="C:membrane"/>
    <property type="evidence" value="ECO:0007669"/>
    <property type="project" value="UniProtKB-SubCell"/>
</dbReference>
<dbReference type="GO" id="GO:0016787">
    <property type="term" value="F:hydrolase activity"/>
    <property type="evidence" value="ECO:0007669"/>
    <property type="project" value="UniProtKB-KW"/>
</dbReference>
<dbReference type="GO" id="GO:0046872">
    <property type="term" value="F:metal ion binding"/>
    <property type="evidence" value="ECO:0007669"/>
    <property type="project" value="UniProtKB-KW"/>
</dbReference>
<dbReference type="CDD" id="cd07385">
    <property type="entry name" value="MPP_YkuE_C"/>
    <property type="match status" value="1"/>
</dbReference>
<dbReference type="Gene3D" id="3.60.21.10">
    <property type="match status" value="1"/>
</dbReference>
<dbReference type="InterPro" id="IPR004843">
    <property type="entry name" value="Calcineurin-like_PHP_ApaH"/>
</dbReference>
<dbReference type="InterPro" id="IPR029052">
    <property type="entry name" value="Metallo-depent_PP-like"/>
</dbReference>
<dbReference type="InterPro" id="IPR051158">
    <property type="entry name" value="Metallophosphoesterase_sf"/>
</dbReference>
<dbReference type="PANTHER" id="PTHR31302:SF0">
    <property type="entry name" value="TRANSMEMBRANE PROTEIN WITH METALLOPHOSPHOESTERASE DOMAIN"/>
    <property type="match status" value="1"/>
</dbReference>
<dbReference type="PANTHER" id="PTHR31302">
    <property type="entry name" value="TRANSMEMBRANE PROTEIN WITH METALLOPHOSPHOESTERASE DOMAIN-RELATED"/>
    <property type="match status" value="1"/>
</dbReference>
<dbReference type="Pfam" id="PF00149">
    <property type="entry name" value="Metallophos"/>
    <property type="match status" value="1"/>
</dbReference>
<dbReference type="SUPFAM" id="SSF56300">
    <property type="entry name" value="Metallo-dependent phosphatases"/>
    <property type="match status" value="1"/>
</dbReference>
<name>YQZ2_CAEEL</name>